<comment type="function">
    <text evidence="1">Functions in complex with FlhD as a master transcriptional regulator that regulates transcription of several flagellar and non-flagellar operons by binding to their promoter region. Activates expression of class 2 flagellar genes, including fliA, which is a flagellum-specific sigma factor that turns on the class 3 genes. Also regulates genes whose products function in a variety of physiological pathways.</text>
</comment>
<comment type="cofactor">
    <cofactor evidence="1">
        <name>Zn(2+)</name>
        <dbReference type="ChEBI" id="CHEBI:29105"/>
    </cofactor>
    <text evidence="1">Binds 1 zinc ion per subunit.</text>
</comment>
<comment type="subunit">
    <text evidence="1">Heterohexamer composed of two FlhC and four FlhD subunits. Each FlhC binds a FlhD dimer, forming a heterotrimer, and a hexamer assembles by dimerization of two heterotrimers.</text>
</comment>
<comment type="subcellular location">
    <subcellularLocation>
        <location evidence="1">Cytoplasm</location>
    </subcellularLocation>
</comment>
<comment type="similarity">
    <text evidence="1">Belongs to the FlhC family.</text>
</comment>
<dbReference type="EMBL" id="AF130387">
    <property type="protein sequence ID" value="AAD31818.1"/>
    <property type="molecule type" value="Genomic_DNA"/>
</dbReference>
<dbReference type="SMR" id="Q9X601"/>
<dbReference type="GO" id="GO:0005737">
    <property type="term" value="C:cytoplasm"/>
    <property type="evidence" value="ECO:0007669"/>
    <property type="project" value="UniProtKB-SubCell"/>
</dbReference>
<dbReference type="GO" id="GO:0003677">
    <property type="term" value="F:DNA binding"/>
    <property type="evidence" value="ECO:0007669"/>
    <property type="project" value="UniProtKB-UniRule"/>
</dbReference>
<dbReference type="GO" id="GO:0008270">
    <property type="term" value="F:zinc ion binding"/>
    <property type="evidence" value="ECO:0007669"/>
    <property type="project" value="UniProtKB-UniRule"/>
</dbReference>
<dbReference type="GO" id="GO:0044781">
    <property type="term" value="P:bacterial-type flagellum organization"/>
    <property type="evidence" value="ECO:0007669"/>
    <property type="project" value="UniProtKB-KW"/>
</dbReference>
<dbReference type="GO" id="GO:0045893">
    <property type="term" value="P:positive regulation of DNA-templated transcription"/>
    <property type="evidence" value="ECO:0007669"/>
    <property type="project" value="InterPro"/>
</dbReference>
<dbReference type="GO" id="GO:1902208">
    <property type="term" value="P:regulation of bacterial-type flagellum assembly"/>
    <property type="evidence" value="ECO:0007669"/>
    <property type="project" value="UniProtKB-UniRule"/>
</dbReference>
<dbReference type="HAMAP" id="MF_01891">
    <property type="entry name" value="FhlC"/>
    <property type="match status" value="1"/>
</dbReference>
<dbReference type="InterPro" id="IPR007944">
    <property type="entry name" value="FlhC"/>
</dbReference>
<dbReference type="NCBIfam" id="NF009365">
    <property type="entry name" value="PRK12722.1"/>
    <property type="match status" value="1"/>
</dbReference>
<dbReference type="Pfam" id="PF05280">
    <property type="entry name" value="FlhC"/>
    <property type="match status" value="1"/>
</dbReference>
<dbReference type="PIRSF" id="PIRSF003159">
    <property type="entry name" value="FlhC"/>
    <property type="match status" value="1"/>
</dbReference>
<dbReference type="SUPFAM" id="SSF160930">
    <property type="entry name" value="FlhC-like"/>
    <property type="match status" value="1"/>
</dbReference>
<proteinExistence type="inferred from homology"/>
<organism>
    <name type="scientific">Pectobacterium carotovorum</name>
    <name type="common">Erwinia carotovora</name>
    <dbReference type="NCBI Taxonomy" id="554"/>
    <lineage>
        <taxon>Bacteria</taxon>
        <taxon>Pseudomonadati</taxon>
        <taxon>Pseudomonadota</taxon>
        <taxon>Gammaproteobacteria</taxon>
        <taxon>Enterobacterales</taxon>
        <taxon>Pectobacteriaceae</taxon>
        <taxon>Pectobacterium</taxon>
    </lineage>
</organism>
<reference key="1">
    <citation type="submission" date="1999-02" db="EMBL/GenBank/DDBJ databases">
        <title>Regulation of low molecular weight bacteriocin biosynthesis by FlhC and FlhD.</title>
        <authorList>
            <person name="Chuang D.Y."/>
        </authorList>
    </citation>
    <scope>NUCLEOTIDE SEQUENCE [GENOMIC DNA]</scope>
</reference>
<feature type="chain" id="PRO_0000064340" description="Flagellar transcriptional regulator FlhC">
    <location>
        <begin position="1"/>
        <end position="193"/>
    </location>
</feature>
<feature type="binding site" evidence="1">
    <location>
        <position position="137"/>
    </location>
    <ligand>
        <name>Zn(2+)</name>
        <dbReference type="ChEBI" id="CHEBI:29105"/>
    </ligand>
</feature>
<feature type="binding site" evidence="1">
    <location>
        <position position="140"/>
    </location>
    <ligand>
        <name>Zn(2+)</name>
        <dbReference type="ChEBI" id="CHEBI:29105"/>
    </ligand>
</feature>
<feature type="binding site" evidence="1">
    <location>
        <position position="158"/>
    </location>
    <ligand>
        <name>Zn(2+)</name>
        <dbReference type="ChEBI" id="CHEBI:29105"/>
    </ligand>
</feature>
<feature type="binding site" evidence="1">
    <location>
        <position position="161"/>
    </location>
    <ligand>
        <name>Zn(2+)</name>
        <dbReference type="ChEBI" id="CHEBI:29105"/>
    </ligand>
</feature>
<sequence length="193" mass="21947">MAEKSIVQEAKDIQLAMELISLGARLQMLESETQLSRGRLIKLYKELRGSPPPKGMLPFSTDWFMTWEQNIHSSMFYNAYSFLIKNGQCSGVKAVIKSYRLYLEQCAPQSDSPLLALTRAWTLVRFVDSGMLQLSSCNCCKGMFIYPRLHQPKNSFVCSLCQPPSRAVKRLKLSQNLADIIPRLLDEQVKHAV</sequence>
<name>FLHC_PECCA</name>
<evidence type="ECO:0000255" key="1">
    <source>
        <dbReference type="HAMAP-Rule" id="MF_01891"/>
    </source>
</evidence>
<accession>Q9X601</accession>
<gene>
    <name evidence="1" type="primary">flhC</name>
</gene>
<keyword id="KW-0010">Activator</keyword>
<keyword id="KW-1005">Bacterial flagellum biogenesis</keyword>
<keyword id="KW-0963">Cytoplasm</keyword>
<keyword id="KW-0238">DNA-binding</keyword>
<keyword id="KW-0479">Metal-binding</keyword>
<keyword id="KW-0804">Transcription</keyword>
<keyword id="KW-0805">Transcription regulation</keyword>
<keyword id="KW-0862">Zinc</keyword>
<protein>
    <recommendedName>
        <fullName evidence="1">Flagellar transcriptional regulator FlhC</fullName>
    </recommendedName>
</protein>